<dbReference type="EMBL" id="AF049705">
    <property type="protein sequence ID" value="AAD02491.1"/>
    <property type="molecule type" value="Genomic_RNA"/>
</dbReference>
<dbReference type="RefSeq" id="YP_249757.1">
    <property type="nucleotide sequence ID" value="NC_007155.1"/>
</dbReference>
<dbReference type="KEGG" id="vg:5075879"/>
<dbReference type="Proteomes" id="UP000001677">
    <property type="component" value="Genome"/>
</dbReference>
<dbReference type="InterPro" id="IPR048607">
    <property type="entry name" value="Reov_VP3_MTase1"/>
</dbReference>
<dbReference type="Pfam" id="PF20831">
    <property type="entry name" value="Reov_VP3_MTase1"/>
    <property type="match status" value="1"/>
</dbReference>
<keyword id="KW-1185">Reference proteome</keyword>
<organismHost>
    <name type="scientific">Saccharum officinarum</name>
    <name type="common">Sugarcane</name>
    <dbReference type="NCBI Taxonomy" id="4547"/>
</organismHost>
<accession>Q9YX47</accession>
<feature type="chain" id="PRO_0000403395" description="Uncharacterized protein VP4">
    <location>
        <begin position="1"/>
        <end position="1146"/>
    </location>
</feature>
<protein>
    <recommendedName>
        <fullName>Uncharacterized protein VP4</fullName>
    </recommendedName>
</protein>
<organism>
    <name type="scientific">Fiji disease virus (isolate Sugarcane)</name>
    <name type="common">FDV</name>
    <dbReference type="NCBI Taxonomy" id="648172"/>
    <lineage>
        <taxon>Viruses</taxon>
        <taxon>Riboviria</taxon>
        <taxon>Orthornavirae</taxon>
        <taxon>Duplornaviricota</taxon>
        <taxon>Resentoviricetes</taxon>
        <taxon>Reovirales</taxon>
        <taxon>Spinareoviridae</taxon>
        <taxon>Fijivirus</taxon>
        <taxon>Fiji disease virus</taxon>
    </lineage>
</organism>
<name>VP4_FDVS</name>
<reference key="1">
    <citation type="submission" date="1998-02" db="EMBL/GenBank/DDBJ databases">
        <title>Molecular characterisation of Fiji disease Fijivirus genome segments 3 and 4.</title>
        <authorList>
            <person name="Handley J.A."/>
            <person name="Soo L.M."/>
            <person name="Maugeri M.M."/>
            <person name="Burns P."/>
            <person name="Smith G.R."/>
            <person name="Dale J.L."/>
            <person name="Harding R.M."/>
        </authorList>
    </citation>
    <scope>NUCLEOTIDE SEQUENCE [GENOMIC RNA]</scope>
</reference>
<sequence>MLNVNANSLIYPFSGQITDIRKNQFIPTSKFINTVINEPIFLTKQKVRTKPGTSHAPRKILEVNPSWNNTFFNWNTALRNPSTVLPSFIYERTESSTSKKSHDQETNQVLINAEILNRKLPQFIKQKFGYIDKRKGGYVNQFGFWALLYSEFCLKLNVPIEYYISMLNLKTQDNNIFLREYNEVEYALRYLVRFDELIYTNGKGRKFIKLPSSGKLDFSVDVEEIENVIGCDLHYWTLWPLSNTYTVQGSGILNHGNIVRGICEFTNELVAAHYYPTYFYEHYLYFEDVSNLIKHQIYNVIRTYKAQLKLQDNLGTNRLERRGYYLTMFCPFFEKYKYSVVDQFGELYLYLNMFGALPFDSADSKSIPKTYNDFDIYYQDRFKNFKDFGYVTYNTTIPNEYKRRNLGPYQLFFTYQQMFDLIQTISTNVNLMYNFKILGFNMMDISNINEIDTNVTSVCRNIEYPLGPSLHLNNLEAIPPNLLELANNVTMQFNSNFLSPYSMYTLPLMRSSAERLIQEDGLRLAVFRLSTAHRKQLKTLQKQVLDPKVLFDRFIRPNLIRCQIPKFEFLFWITYCVDEFPMYTISSTGDLDVTPLTSSDEKRKSSVTNNSSFKLLCMAFQFLSEFGIREIVKPNSVLFLGAKNEPVGDMLRRLSHGLWSVQRVGADAEYPSKKANINNVNLKNTYDLVISDMDQSTGTTVEAISALCVSQLKKCIECFNRRLVFKIQYGLFHTLCAIRDCLIECGQDYAGQNLYFNMKIVRSCWSKVGSMELFLILDKTKTEHELYTVDQLRAVVNSFGFSETNTVFYTYMGTPSRYQLNDLNCKIFSVDVTVNEFSDVLSTFMNLSNCVSYGALKNEAYVDTLTIFGATNIQRIGLFMRNKQIYKSLALDGKDHRPEGIFDPRKCFVIPGAREVLILSDAQRMKAWKILKKMHFDRAVLDTSLTIYDIGCRDFECAYLAVMDEDTILPYVGIDKSTILDVKRNLTIERREVNRTELYRLATLGHVFVYNSYFMDFPTRAKLEEELNYLYDNLVLKGVMLMSFYCLHDELLPVLKDHGFVDISSKDVKENKFSFGRYHGFGTVDYNFMLEWLTKMSQKFEVHTVILSASDISFSCVMHGNAINLDSIYFAPIFNMVQPCFLIKNK</sequence>
<proteinExistence type="predicted"/>
<gene>
    <name type="primary">S4</name>
</gene>